<comment type="function">
    <text evidence="1">This enzyme is involved in nucleotide metabolism: it produces dUMP, the immediate precursor of thymidine nucleotides and it decreases the intracellular concentration of dUTP so that uracil cannot be incorporated into DNA.</text>
</comment>
<comment type="catalytic activity">
    <reaction evidence="1">
        <text>dUTP + H2O = dUMP + diphosphate + H(+)</text>
        <dbReference type="Rhea" id="RHEA:10248"/>
        <dbReference type="ChEBI" id="CHEBI:15377"/>
        <dbReference type="ChEBI" id="CHEBI:15378"/>
        <dbReference type="ChEBI" id="CHEBI:33019"/>
        <dbReference type="ChEBI" id="CHEBI:61555"/>
        <dbReference type="ChEBI" id="CHEBI:246422"/>
        <dbReference type="EC" id="3.6.1.23"/>
    </reaction>
</comment>
<comment type="cofactor">
    <cofactor evidence="1">
        <name>Mg(2+)</name>
        <dbReference type="ChEBI" id="CHEBI:18420"/>
    </cofactor>
</comment>
<comment type="pathway">
    <text evidence="1">Pyrimidine metabolism; dUMP biosynthesis; dUMP from dCTP (dUTP route): step 2/2.</text>
</comment>
<comment type="similarity">
    <text evidence="1">Belongs to the dUTPase family.</text>
</comment>
<evidence type="ECO:0000255" key="1">
    <source>
        <dbReference type="HAMAP-Rule" id="MF_00116"/>
    </source>
</evidence>
<keyword id="KW-0378">Hydrolase</keyword>
<keyword id="KW-0460">Magnesium</keyword>
<keyword id="KW-0479">Metal-binding</keyword>
<keyword id="KW-0546">Nucleotide metabolism</keyword>
<keyword id="KW-1185">Reference proteome</keyword>
<gene>
    <name evidence="1" type="primary">dut</name>
    <name type="ordered locus">GOX2497</name>
</gene>
<name>DUT_GLUOX</name>
<dbReference type="EC" id="3.6.1.23" evidence="1"/>
<dbReference type="EMBL" id="CP000009">
    <property type="protein sequence ID" value="AAW62227.1"/>
    <property type="molecule type" value="Genomic_DNA"/>
</dbReference>
<dbReference type="RefSeq" id="WP_011253994.1">
    <property type="nucleotide sequence ID" value="NZ_LT900338.1"/>
</dbReference>
<dbReference type="SMR" id="Q5FN20"/>
<dbReference type="STRING" id="290633.GOX2497"/>
<dbReference type="GeneID" id="56906756"/>
<dbReference type="KEGG" id="gox:GOX2497"/>
<dbReference type="eggNOG" id="COG0756">
    <property type="taxonomic scope" value="Bacteria"/>
</dbReference>
<dbReference type="HOGENOM" id="CLU_068508_1_2_5"/>
<dbReference type="UniPathway" id="UPA00610">
    <property type="reaction ID" value="UER00666"/>
</dbReference>
<dbReference type="Proteomes" id="UP000006375">
    <property type="component" value="Chromosome"/>
</dbReference>
<dbReference type="GO" id="GO:0004170">
    <property type="term" value="F:dUTP diphosphatase activity"/>
    <property type="evidence" value="ECO:0007669"/>
    <property type="project" value="UniProtKB-UniRule"/>
</dbReference>
<dbReference type="GO" id="GO:0000287">
    <property type="term" value="F:magnesium ion binding"/>
    <property type="evidence" value="ECO:0007669"/>
    <property type="project" value="UniProtKB-UniRule"/>
</dbReference>
<dbReference type="GO" id="GO:0006226">
    <property type="term" value="P:dUMP biosynthetic process"/>
    <property type="evidence" value="ECO:0007669"/>
    <property type="project" value="UniProtKB-UniRule"/>
</dbReference>
<dbReference type="GO" id="GO:0046081">
    <property type="term" value="P:dUTP catabolic process"/>
    <property type="evidence" value="ECO:0007669"/>
    <property type="project" value="InterPro"/>
</dbReference>
<dbReference type="CDD" id="cd07557">
    <property type="entry name" value="trimeric_dUTPase"/>
    <property type="match status" value="1"/>
</dbReference>
<dbReference type="FunFam" id="2.70.40.10:FF:000002">
    <property type="entry name" value="dUTP diphosphatase"/>
    <property type="match status" value="1"/>
</dbReference>
<dbReference type="Gene3D" id="2.70.40.10">
    <property type="match status" value="1"/>
</dbReference>
<dbReference type="HAMAP" id="MF_00116">
    <property type="entry name" value="dUTPase_bact"/>
    <property type="match status" value="1"/>
</dbReference>
<dbReference type="InterPro" id="IPR008181">
    <property type="entry name" value="dUTPase"/>
</dbReference>
<dbReference type="InterPro" id="IPR029054">
    <property type="entry name" value="dUTPase-like"/>
</dbReference>
<dbReference type="InterPro" id="IPR036157">
    <property type="entry name" value="dUTPase-like_sf"/>
</dbReference>
<dbReference type="InterPro" id="IPR033704">
    <property type="entry name" value="dUTPase_trimeric"/>
</dbReference>
<dbReference type="NCBIfam" id="TIGR00576">
    <property type="entry name" value="dut"/>
    <property type="match status" value="1"/>
</dbReference>
<dbReference type="NCBIfam" id="NF001862">
    <property type="entry name" value="PRK00601.1"/>
    <property type="match status" value="1"/>
</dbReference>
<dbReference type="PANTHER" id="PTHR11241">
    <property type="entry name" value="DEOXYURIDINE 5'-TRIPHOSPHATE NUCLEOTIDOHYDROLASE"/>
    <property type="match status" value="1"/>
</dbReference>
<dbReference type="PANTHER" id="PTHR11241:SF0">
    <property type="entry name" value="DEOXYURIDINE 5'-TRIPHOSPHATE NUCLEOTIDOHYDROLASE"/>
    <property type="match status" value="1"/>
</dbReference>
<dbReference type="Pfam" id="PF00692">
    <property type="entry name" value="dUTPase"/>
    <property type="match status" value="1"/>
</dbReference>
<dbReference type="SUPFAM" id="SSF51283">
    <property type="entry name" value="dUTPase-like"/>
    <property type="match status" value="1"/>
</dbReference>
<feature type="chain" id="PRO_0000231411" description="Deoxyuridine 5'-triphosphate nucleotidohydrolase">
    <location>
        <begin position="1"/>
        <end position="151"/>
    </location>
</feature>
<feature type="binding site" evidence="1">
    <location>
        <begin position="71"/>
        <end position="73"/>
    </location>
    <ligand>
        <name>substrate</name>
    </ligand>
</feature>
<feature type="binding site" evidence="1">
    <location>
        <position position="84"/>
    </location>
    <ligand>
        <name>substrate</name>
    </ligand>
</feature>
<feature type="binding site" evidence="1">
    <location>
        <begin position="88"/>
        <end position="90"/>
    </location>
    <ligand>
        <name>substrate</name>
    </ligand>
</feature>
<reference key="1">
    <citation type="journal article" date="2005" name="Nat. Biotechnol.">
        <title>Complete genome sequence of the acetic acid bacterium Gluconobacter oxydans.</title>
        <authorList>
            <person name="Prust C."/>
            <person name="Hoffmeister M."/>
            <person name="Liesegang H."/>
            <person name="Wiezer A."/>
            <person name="Fricke W.F."/>
            <person name="Ehrenreich A."/>
            <person name="Gottschalk G."/>
            <person name="Deppenmeier U."/>
        </authorList>
    </citation>
    <scope>NUCLEOTIDE SEQUENCE [LARGE SCALE GENOMIC DNA]</scope>
    <source>
        <strain>621H</strain>
    </source>
</reference>
<organism>
    <name type="scientific">Gluconobacter oxydans (strain 621H)</name>
    <name type="common">Gluconobacter suboxydans</name>
    <dbReference type="NCBI Taxonomy" id="290633"/>
    <lineage>
        <taxon>Bacteria</taxon>
        <taxon>Pseudomonadati</taxon>
        <taxon>Pseudomonadota</taxon>
        <taxon>Alphaproteobacteria</taxon>
        <taxon>Acetobacterales</taxon>
        <taxon>Acetobacteraceae</taxon>
        <taxon>Gluconobacter</taxon>
    </lineage>
</organism>
<proteinExistence type="inferred from homology"/>
<protein>
    <recommendedName>
        <fullName evidence="1">Deoxyuridine 5'-triphosphate nucleotidohydrolase</fullName>
        <shortName evidence="1">dUTPase</shortName>
        <ecNumber evidence="1">3.6.1.23</ecNumber>
    </recommendedName>
    <alternativeName>
        <fullName evidence="1">dUTP pyrophosphatase</fullName>
    </alternativeName>
</protein>
<accession>Q5FN20</accession>
<sequence length="151" mass="16045">MTTDLIDVRITRLPHSEGLPLPAYATAGAAGFDFLAAVDAPMTIAPGERVLVPTGLCIALPPAYELQVRPRSGLALKHGITLPNSPGTIDEDYRGELRIIVMNAGTEPFTVERGTRIAQGVLAPVSRLRWTEVETLDETARGEGGFGSTGH</sequence>